<protein>
    <recommendedName>
        <fullName evidence="1">Small ribosomal subunit protein uS10</fullName>
    </recommendedName>
    <alternativeName>
        <fullName evidence="2">30S ribosomal protein S10</fullName>
    </alternativeName>
</protein>
<dbReference type="EMBL" id="CP000076">
    <property type="protein sequence ID" value="AAY94788.1"/>
    <property type="molecule type" value="Genomic_DNA"/>
</dbReference>
<dbReference type="RefSeq" id="WP_003186070.1">
    <property type="nucleotide sequence ID" value="NC_004129.6"/>
</dbReference>
<dbReference type="SMR" id="Q4K532"/>
<dbReference type="STRING" id="220664.PFL_5583"/>
<dbReference type="GeneID" id="98636782"/>
<dbReference type="KEGG" id="pfl:PFL_5583"/>
<dbReference type="eggNOG" id="COG0051">
    <property type="taxonomic scope" value="Bacteria"/>
</dbReference>
<dbReference type="HOGENOM" id="CLU_122625_1_3_6"/>
<dbReference type="Proteomes" id="UP000008540">
    <property type="component" value="Chromosome"/>
</dbReference>
<dbReference type="GO" id="GO:1990904">
    <property type="term" value="C:ribonucleoprotein complex"/>
    <property type="evidence" value="ECO:0007669"/>
    <property type="project" value="UniProtKB-KW"/>
</dbReference>
<dbReference type="GO" id="GO:0005840">
    <property type="term" value="C:ribosome"/>
    <property type="evidence" value="ECO:0007669"/>
    <property type="project" value="UniProtKB-KW"/>
</dbReference>
<dbReference type="GO" id="GO:0003735">
    <property type="term" value="F:structural constituent of ribosome"/>
    <property type="evidence" value="ECO:0007669"/>
    <property type="project" value="InterPro"/>
</dbReference>
<dbReference type="GO" id="GO:0000049">
    <property type="term" value="F:tRNA binding"/>
    <property type="evidence" value="ECO:0007669"/>
    <property type="project" value="UniProtKB-UniRule"/>
</dbReference>
<dbReference type="GO" id="GO:0006412">
    <property type="term" value="P:translation"/>
    <property type="evidence" value="ECO:0007669"/>
    <property type="project" value="UniProtKB-UniRule"/>
</dbReference>
<dbReference type="FunFam" id="3.30.70.600:FF:000001">
    <property type="entry name" value="30S ribosomal protein S10"/>
    <property type="match status" value="1"/>
</dbReference>
<dbReference type="Gene3D" id="3.30.70.600">
    <property type="entry name" value="Ribosomal protein S10 domain"/>
    <property type="match status" value="1"/>
</dbReference>
<dbReference type="HAMAP" id="MF_00508">
    <property type="entry name" value="Ribosomal_uS10"/>
    <property type="match status" value="1"/>
</dbReference>
<dbReference type="InterPro" id="IPR001848">
    <property type="entry name" value="Ribosomal_uS10"/>
</dbReference>
<dbReference type="InterPro" id="IPR018268">
    <property type="entry name" value="Ribosomal_uS10_CS"/>
</dbReference>
<dbReference type="InterPro" id="IPR027486">
    <property type="entry name" value="Ribosomal_uS10_dom"/>
</dbReference>
<dbReference type="InterPro" id="IPR036838">
    <property type="entry name" value="Ribosomal_uS10_dom_sf"/>
</dbReference>
<dbReference type="NCBIfam" id="NF001861">
    <property type="entry name" value="PRK00596.1"/>
    <property type="match status" value="1"/>
</dbReference>
<dbReference type="NCBIfam" id="TIGR01049">
    <property type="entry name" value="rpsJ_bact"/>
    <property type="match status" value="1"/>
</dbReference>
<dbReference type="PANTHER" id="PTHR11700">
    <property type="entry name" value="30S RIBOSOMAL PROTEIN S10 FAMILY MEMBER"/>
    <property type="match status" value="1"/>
</dbReference>
<dbReference type="Pfam" id="PF00338">
    <property type="entry name" value="Ribosomal_S10"/>
    <property type="match status" value="1"/>
</dbReference>
<dbReference type="PRINTS" id="PR00971">
    <property type="entry name" value="RIBOSOMALS10"/>
</dbReference>
<dbReference type="SMART" id="SM01403">
    <property type="entry name" value="Ribosomal_S10"/>
    <property type="match status" value="1"/>
</dbReference>
<dbReference type="SUPFAM" id="SSF54999">
    <property type="entry name" value="Ribosomal protein S10"/>
    <property type="match status" value="1"/>
</dbReference>
<dbReference type="PROSITE" id="PS00361">
    <property type="entry name" value="RIBOSOMAL_S10"/>
    <property type="match status" value="1"/>
</dbReference>
<proteinExistence type="inferred from homology"/>
<evidence type="ECO:0000255" key="1">
    <source>
        <dbReference type="HAMAP-Rule" id="MF_00508"/>
    </source>
</evidence>
<evidence type="ECO:0000305" key="2"/>
<sequence length="103" mass="11753">MQNQQIRIRLKAFDHRLIDQSTQEIVETAKRTGAQVRGPIPLPTRKERFTVLVSPHVNKDARDQYEIRTHKRVLDIVQPTDKTVDALMKLDLAAGVEVQISLG</sequence>
<reference key="1">
    <citation type="journal article" date="2005" name="Nat. Biotechnol.">
        <title>Complete genome sequence of the plant commensal Pseudomonas fluorescens Pf-5.</title>
        <authorList>
            <person name="Paulsen I.T."/>
            <person name="Press C.M."/>
            <person name="Ravel J."/>
            <person name="Kobayashi D.Y."/>
            <person name="Myers G.S.A."/>
            <person name="Mavrodi D.V."/>
            <person name="DeBoy R.T."/>
            <person name="Seshadri R."/>
            <person name="Ren Q."/>
            <person name="Madupu R."/>
            <person name="Dodson R.J."/>
            <person name="Durkin A.S."/>
            <person name="Brinkac L.M."/>
            <person name="Daugherty S.C."/>
            <person name="Sullivan S.A."/>
            <person name="Rosovitz M.J."/>
            <person name="Gwinn M.L."/>
            <person name="Zhou L."/>
            <person name="Schneider D.J."/>
            <person name="Cartinhour S.W."/>
            <person name="Nelson W.C."/>
            <person name="Weidman J."/>
            <person name="Watkins K."/>
            <person name="Tran K."/>
            <person name="Khouri H."/>
            <person name="Pierson E.A."/>
            <person name="Pierson L.S. III"/>
            <person name="Thomashow L.S."/>
            <person name="Loper J.E."/>
        </authorList>
    </citation>
    <scope>NUCLEOTIDE SEQUENCE [LARGE SCALE GENOMIC DNA]</scope>
    <source>
        <strain>ATCC BAA-477 / NRRL B-23932 / Pf-5</strain>
    </source>
</reference>
<accession>Q4K532</accession>
<comment type="function">
    <text evidence="1">Involved in the binding of tRNA to the ribosomes.</text>
</comment>
<comment type="subunit">
    <text evidence="1">Part of the 30S ribosomal subunit.</text>
</comment>
<comment type="similarity">
    <text evidence="1">Belongs to the universal ribosomal protein uS10 family.</text>
</comment>
<organism>
    <name type="scientific">Pseudomonas fluorescens (strain ATCC BAA-477 / NRRL B-23932 / Pf-5)</name>
    <dbReference type="NCBI Taxonomy" id="220664"/>
    <lineage>
        <taxon>Bacteria</taxon>
        <taxon>Pseudomonadati</taxon>
        <taxon>Pseudomonadota</taxon>
        <taxon>Gammaproteobacteria</taxon>
        <taxon>Pseudomonadales</taxon>
        <taxon>Pseudomonadaceae</taxon>
        <taxon>Pseudomonas</taxon>
    </lineage>
</organism>
<name>RS10_PSEF5</name>
<gene>
    <name evidence="1" type="primary">rpsJ</name>
    <name type="ordered locus">PFL_5583</name>
</gene>
<keyword id="KW-0687">Ribonucleoprotein</keyword>
<keyword id="KW-0689">Ribosomal protein</keyword>
<feature type="chain" id="PRO_0000237080" description="Small ribosomal subunit protein uS10">
    <location>
        <begin position="1"/>
        <end position="103"/>
    </location>
</feature>